<reference key="1">
    <citation type="journal article" date="2010" name="Proc. Natl. Acad. Sci. U.S.A.">
        <title>Insights into evolution of multicellular fungi from the assembled chromosomes of the mushroom Coprinopsis cinerea (Coprinus cinereus).</title>
        <authorList>
            <person name="Stajich J.E."/>
            <person name="Wilke S.K."/>
            <person name="Ahren D."/>
            <person name="Au C.H."/>
            <person name="Birren B.W."/>
            <person name="Borodovsky M."/>
            <person name="Burns C."/>
            <person name="Canbaeck B."/>
            <person name="Casselton L.A."/>
            <person name="Cheng C.K."/>
            <person name="Deng J."/>
            <person name="Dietrich F.S."/>
            <person name="Fargo D.C."/>
            <person name="Farman M.L."/>
            <person name="Gathman A.C."/>
            <person name="Goldberg J."/>
            <person name="Guigo R."/>
            <person name="Hoegger P.J."/>
            <person name="Hooker J.B."/>
            <person name="Huggins A."/>
            <person name="James T.Y."/>
            <person name="Kamada T."/>
            <person name="Kilaru S."/>
            <person name="Kodira C."/>
            <person name="Kuees U."/>
            <person name="Kupfer D."/>
            <person name="Kwan H.S."/>
            <person name="Lomsadze A."/>
            <person name="Li W."/>
            <person name="Lilly W.W."/>
            <person name="Ma L.-J."/>
            <person name="Mackey A.J."/>
            <person name="Manning G."/>
            <person name="Martin F."/>
            <person name="Muraguchi H."/>
            <person name="Natvig D.O."/>
            <person name="Palmerini H."/>
            <person name="Ramesh M.A."/>
            <person name="Rehmeyer C.J."/>
            <person name="Roe B.A."/>
            <person name="Shenoy N."/>
            <person name="Stanke M."/>
            <person name="Ter-Hovhannisyan V."/>
            <person name="Tunlid A."/>
            <person name="Velagapudi R."/>
            <person name="Vision T.J."/>
            <person name="Zeng Q."/>
            <person name="Zolan M.E."/>
            <person name="Pukkila P.J."/>
        </authorList>
    </citation>
    <scope>NUCLEOTIDE SEQUENCE [LARGE SCALE GENOMIC DNA]</scope>
    <source>
        <strain>Okayama-7 / 130 / ATCC MYA-4618 / FGSC 9003</strain>
    </source>
</reference>
<sequence length="448" mass="48468">MDASTSNQAVVFSTQTPYPLPSQKYMIPTTWRRYHLSQLVNKALGLAKPVPFDFLVKGEILRTTIAEWCAENGVGEEETLEIEYIESVLPPQRLSEFPHESWVSAVSCSLPTHFLTTAYDGHLRAFDLSKNVTLDAALHSAPITSFSVISSTVDTYKLATSSLDLTAQISEITLGEPQSSSSNKVLASLHLHTAPVSSIAANPSGTQLLTSSWDSLIGVWDTTIPPKHEVPEPTITAADQRTKKRRKVDPSSGDSSSPTAIRKAPLTVLKSHIGRVSKVAWLSPTQGVSCGFDSTLRTWDVERGLCTRTISASEKPFLDLAVNVENQTALTVSTDRTMTLYDLRTEEALSAAAGSFLHPATPSCVATTPESSYQVVTGAYDGVVRVWDTRSTKAAISSFKAWDGTKKVLAVDWKRGVIGIGGEGGLDVWKVGLENETQGLSKESQRSA</sequence>
<keyword id="KW-0539">Nucleus</keyword>
<keyword id="KW-1185">Reference proteome</keyword>
<keyword id="KW-0677">Repeat</keyword>
<keyword id="KW-0690">Ribosome biogenesis</keyword>
<keyword id="KW-0698">rRNA processing</keyword>
<keyword id="KW-0853">WD repeat</keyword>
<evidence type="ECO:0000255" key="1">
    <source>
        <dbReference type="HAMAP-Rule" id="MF_03029"/>
    </source>
</evidence>
<evidence type="ECO:0000256" key="2">
    <source>
        <dbReference type="SAM" id="MobiDB-lite"/>
    </source>
</evidence>
<protein>
    <recommendedName>
        <fullName evidence="1">Ribosome biogenesis protein YTM1</fullName>
    </recommendedName>
</protein>
<proteinExistence type="inferred from homology"/>
<dbReference type="EMBL" id="AACS02000006">
    <property type="protein sequence ID" value="EAU81305.1"/>
    <property type="molecule type" value="Genomic_DNA"/>
</dbReference>
<dbReference type="RefSeq" id="XP_001840505.1">
    <property type="nucleotide sequence ID" value="XM_001840453.1"/>
</dbReference>
<dbReference type="SMR" id="A8PD13"/>
<dbReference type="FunCoup" id="A8PD13">
    <property type="interactions" value="419"/>
</dbReference>
<dbReference type="STRING" id="240176.A8PD13"/>
<dbReference type="GeneID" id="6017152"/>
<dbReference type="KEGG" id="cci:CC1G_07235"/>
<dbReference type="VEuPathDB" id="FungiDB:CC1G_07235"/>
<dbReference type="eggNOG" id="KOG0313">
    <property type="taxonomic scope" value="Eukaryota"/>
</dbReference>
<dbReference type="HOGENOM" id="CLU_000288_57_0_1"/>
<dbReference type="InParanoid" id="A8PD13"/>
<dbReference type="OMA" id="DHKYVEF"/>
<dbReference type="OrthoDB" id="10251381at2759"/>
<dbReference type="Proteomes" id="UP000001861">
    <property type="component" value="Unassembled WGS sequence"/>
</dbReference>
<dbReference type="GO" id="GO:0005730">
    <property type="term" value="C:nucleolus"/>
    <property type="evidence" value="ECO:0007669"/>
    <property type="project" value="UniProtKB-SubCell"/>
</dbReference>
<dbReference type="GO" id="GO:0005654">
    <property type="term" value="C:nucleoplasm"/>
    <property type="evidence" value="ECO:0007669"/>
    <property type="project" value="UniProtKB-SubCell"/>
</dbReference>
<dbReference type="GO" id="GO:0030687">
    <property type="term" value="C:preribosome, large subunit precursor"/>
    <property type="evidence" value="ECO:0007669"/>
    <property type="project" value="UniProtKB-UniRule"/>
</dbReference>
<dbReference type="GO" id="GO:0043021">
    <property type="term" value="F:ribonucleoprotein complex binding"/>
    <property type="evidence" value="ECO:0007669"/>
    <property type="project" value="UniProtKB-UniRule"/>
</dbReference>
<dbReference type="GO" id="GO:0000466">
    <property type="term" value="P:maturation of 5.8S rRNA from tricistronic rRNA transcript (SSU-rRNA, 5.8S rRNA, LSU-rRNA)"/>
    <property type="evidence" value="ECO:0007669"/>
    <property type="project" value="UniProtKB-UniRule"/>
</dbReference>
<dbReference type="GO" id="GO:0000463">
    <property type="term" value="P:maturation of LSU-rRNA from tricistronic rRNA transcript (SSU-rRNA, 5.8S rRNA, LSU-rRNA)"/>
    <property type="evidence" value="ECO:0007669"/>
    <property type="project" value="UniProtKB-UniRule"/>
</dbReference>
<dbReference type="Gene3D" id="2.130.10.10">
    <property type="entry name" value="YVTN repeat-like/Quinoprotein amine dehydrogenase"/>
    <property type="match status" value="1"/>
</dbReference>
<dbReference type="HAMAP" id="MF_03029">
    <property type="entry name" value="WDR12"/>
    <property type="match status" value="1"/>
</dbReference>
<dbReference type="InterPro" id="IPR020472">
    <property type="entry name" value="G-protein_beta_WD-40_rep"/>
</dbReference>
<dbReference type="InterPro" id="IPR012972">
    <property type="entry name" value="NLE"/>
</dbReference>
<dbReference type="InterPro" id="IPR015943">
    <property type="entry name" value="WD40/YVTN_repeat-like_dom_sf"/>
</dbReference>
<dbReference type="InterPro" id="IPR019775">
    <property type="entry name" value="WD40_repeat_CS"/>
</dbReference>
<dbReference type="InterPro" id="IPR036322">
    <property type="entry name" value="WD40_repeat_dom_sf"/>
</dbReference>
<dbReference type="InterPro" id="IPR001680">
    <property type="entry name" value="WD40_rpt"/>
</dbReference>
<dbReference type="InterPro" id="IPR028599">
    <property type="entry name" value="WDR12/Ytm1"/>
</dbReference>
<dbReference type="PANTHER" id="PTHR19855:SF11">
    <property type="entry name" value="RIBOSOME BIOGENESIS PROTEIN WDR12"/>
    <property type="match status" value="1"/>
</dbReference>
<dbReference type="PANTHER" id="PTHR19855">
    <property type="entry name" value="WD40 REPEAT PROTEIN 12, 37"/>
    <property type="match status" value="1"/>
</dbReference>
<dbReference type="Pfam" id="PF08154">
    <property type="entry name" value="NLE"/>
    <property type="match status" value="1"/>
</dbReference>
<dbReference type="Pfam" id="PF00400">
    <property type="entry name" value="WD40"/>
    <property type="match status" value="3"/>
</dbReference>
<dbReference type="PRINTS" id="PR00320">
    <property type="entry name" value="GPROTEINBRPT"/>
</dbReference>
<dbReference type="SMART" id="SM00320">
    <property type="entry name" value="WD40"/>
    <property type="match status" value="5"/>
</dbReference>
<dbReference type="SUPFAM" id="SSF50978">
    <property type="entry name" value="WD40 repeat-like"/>
    <property type="match status" value="1"/>
</dbReference>
<dbReference type="PROSITE" id="PS00678">
    <property type="entry name" value="WD_REPEATS_1"/>
    <property type="match status" value="2"/>
</dbReference>
<dbReference type="PROSITE" id="PS50082">
    <property type="entry name" value="WD_REPEATS_2"/>
    <property type="match status" value="3"/>
</dbReference>
<dbReference type="PROSITE" id="PS50294">
    <property type="entry name" value="WD_REPEATS_REGION"/>
    <property type="match status" value="2"/>
</dbReference>
<gene>
    <name evidence="1" type="primary">YTM1</name>
    <name type="ORF">CC1G_07235</name>
</gene>
<comment type="function">
    <text evidence="1">Component of the NOP7 complex, which is required for maturation of the 25S and 5.8S ribosomal RNAs and formation of the 60S ribosome.</text>
</comment>
<comment type="subunit">
    <text evidence="1">Component of the NOP7 complex, composed of ERB1, NOP7 and YTM1. The complex is held together by ERB1, which interacts with NOP7 via its N-terminal domain and with YTM1 via a high-affinity interaction between the seven-bladed beta-propeller domains of the 2 proteins. The NOP7 complex associates with the 66S pre-ribosome. Interacts (via UBL domain) with MDN1 (via VWFA/MIDAS domain).</text>
</comment>
<comment type="subcellular location">
    <subcellularLocation>
        <location evidence="1">Nucleus</location>
        <location evidence="1">Nucleolus</location>
    </subcellularLocation>
    <subcellularLocation>
        <location evidence="1">Nucleus</location>
        <location evidence="1">Nucleoplasm</location>
    </subcellularLocation>
</comment>
<comment type="similarity">
    <text evidence="1">Belongs to the WD repeat WDR12/YTM1 family.</text>
</comment>
<accession>A8PD13</accession>
<feature type="chain" id="PRO_0000369585" description="Ribosome biogenesis protein YTM1">
    <location>
        <begin position="1"/>
        <end position="448"/>
    </location>
</feature>
<feature type="repeat" description="WD 1">
    <location>
        <begin position="98"/>
        <end position="136"/>
    </location>
</feature>
<feature type="repeat" description="WD 2">
    <location>
        <begin position="191"/>
        <end position="230"/>
    </location>
</feature>
<feature type="repeat" description="WD 3">
    <location>
        <begin position="271"/>
        <end position="309"/>
    </location>
</feature>
<feature type="repeat" description="WD 4">
    <location>
        <begin position="312"/>
        <end position="351"/>
    </location>
</feature>
<feature type="repeat" description="WD 5">
    <location>
        <begin position="357"/>
        <end position="397"/>
    </location>
</feature>
<feature type="repeat" description="WD 6">
    <location>
        <begin position="403"/>
        <end position="439"/>
    </location>
</feature>
<feature type="region of interest" description="Ubiquitin-like (UBL) domain" evidence="1">
    <location>
        <begin position="5"/>
        <end position="86"/>
    </location>
</feature>
<feature type="region of interest" description="Disordered" evidence="2">
    <location>
        <begin position="225"/>
        <end position="261"/>
    </location>
</feature>
<organism>
    <name type="scientific">Coprinopsis cinerea (strain Okayama-7 / 130 / ATCC MYA-4618 / FGSC 9003)</name>
    <name type="common">Inky cap fungus</name>
    <name type="synonym">Hormographiella aspergillata</name>
    <dbReference type="NCBI Taxonomy" id="240176"/>
    <lineage>
        <taxon>Eukaryota</taxon>
        <taxon>Fungi</taxon>
        <taxon>Dikarya</taxon>
        <taxon>Basidiomycota</taxon>
        <taxon>Agaricomycotina</taxon>
        <taxon>Agaricomycetes</taxon>
        <taxon>Agaricomycetidae</taxon>
        <taxon>Agaricales</taxon>
        <taxon>Agaricineae</taxon>
        <taxon>Psathyrellaceae</taxon>
        <taxon>Coprinopsis</taxon>
    </lineage>
</organism>
<name>YTM1_COPC7</name>